<keyword id="KW-0021">Allosteric enzyme</keyword>
<keyword id="KW-0328">Glycosyltransferase</keyword>
<keyword id="KW-0342">GTP-binding</keyword>
<keyword id="KW-0460">Magnesium</keyword>
<keyword id="KW-0547">Nucleotide-binding</keyword>
<keyword id="KW-0808">Transferase</keyword>
<sequence length="209" mass="22929">MGKFTVLNHPLIQHKLTIIRKKDTGTNEFRQIVGEIGGLMVYEMTRDLPLKNVEIETPIGKSTQKELAGKKLVIVPILRAGLGMVDGVLQMIPSAKVGHIGMYRDEETLKPHEYFFKMPPDIEERECIIVDPMLATGGSANMAIGALKKRGAKNIRLAVLVAAPEGVKAVQEANPDVDIYAAEEDEKLMDNGYIYPGLGDAGDRLFGTK</sequence>
<proteinExistence type="inferred from homology"/>
<accession>Q042K8</accession>
<reference key="1">
    <citation type="journal article" date="2006" name="Proc. Natl. Acad. Sci. U.S.A.">
        <title>Comparative genomics of the lactic acid bacteria.</title>
        <authorList>
            <person name="Makarova K.S."/>
            <person name="Slesarev A."/>
            <person name="Wolf Y.I."/>
            <person name="Sorokin A."/>
            <person name="Mirkin B."/>
            <person name="Koonin E.V."/>
            <person name="Pavlov A."/>
            <person name="Pavlova N."/>
            <person name="Karamychev V."/>
            <person name="Polouchine N."/>
            <person name="Shakhova V."/>
            <person name="Grigoriev I."/>
            <person name="Lou Y."/>
            <person name="Rohksar D."/>
            <person name="Lucas S."/>
            <person name="Huang K."/>
            <person name="Goodstein D.M."/>
            <person name="Hawkins T."/>
            <person name="Plengvidhya V."/>
            <person name="Welker D."/>
            <person name="Hughes J."/>
            <person name="Goh Y."/>
            <person name="Benson A."/>
            <person name="Baldwin K."/>
            <person name="Lee J.-H."/>
            <person name="Diaz-Muniz I."/>
            <person name="Dosti B."/>
            <person name="Smeianov V."/>
            <person name="Wechter W."/>
            <person name="Barabote R."/>
            <person name="Lorca G."/>
            <person name="Altermann E."/>
            <person name="Barrangou R."/>
            <person name="Ganesan B."/>
            <person name="Xie Y."/>
            <person name="Rawsthorne H."/>
            <person name="Tamir D."/>
            <person name="Parker C."/>
            <person name="Breidt F."/>
            <person name="Broadbent J.R."/>
            <person name="Hutkins R."/>
            <person name="O'Sullivan D."/>
            <person name="Steele J."/>
            <person name="Unlu G."/>
            <person name="Saier M.H. Jr."/>
            <person name="Klaenhammer T."/>
            <person name="Richardson P."/>
            <person name="Kozyavkin S."/>
            <person name="Weimer B.C."/>
            <person name="Mills D.A."/>
        </authorList>
    </citation>
    <scope>NUCLEOTIDE SEQUENCE [LARGE SCALE GENOMIC DNA]</scope>
    <source>
        <strain>ATCC 33323 / DSM 20243 / BCRC 14619 / CIP 102991 / JCM 1131 / KCTC 3163 / NCIMB 11718 / NCTC 13722 / AM63</strain>
    </source>
</reference>
<organism>
    <name type="scientific">Lactobacillus gasseri (strain ATCC 33323 / DSM 20243 / BCRC 14619 / CIP 102991 / JCM 1131 / KCTC 3163 / NCIMB 11718 / NCTC 13722 / AM63)</name>
    <dbReference type="NCBI Taxonomy" id="324831"/>
    <lineage>
        <taxon>Bacteria</taxon>
        <taxon>Bacillati</taxon>
        <taxon>Bacillota</taxon>
        <taxon>Bacilli</taxon>
        <taxon>Lactobacillales</taxon>
        <taxon>Lactobacillaceae</taxon>
        <taxon>Lactobacillus</taxon>
    </lineage>
</organism>
<name>UPP_LACGA</name>
<dbReference type="EC" id="2.4.2.9" evidence="1"/>
<dbReference type="EMBL" id="CP000413">
    <property type="protein sequence ID" value="ABJ60614.1"/>
    <property type="molecule type" value="Genomic_DNA"/>
</dbReference>
<dbReference type="RefSeq" id="WP_011678916.1">
    <property type="nucleotide sequence ID" value="NZ_WBMG01000002.1"/>
</dbReference>
<dbReference type="SMR" id="Q042K8"/>
<dbReference type="GeneID" id="29639102"/>
<dbReference type="KEGG" id="lga:LGAS_1245"/>
<dbReference type="HOGENOM" id="CLU_067096_2_2_9"/>
<dbReference type="BioCyc" id="LGAS324831:G1G6Y-1241-MONOMER"/>
<dbReference type="UniPathway" id="UPA00574">
    <property type="reaction ID" value="UER00636"/>
</dbReference>
<dbReference type="Proteomes" id="UP000000664">
    <property type="component" value="Chromosome"/>
</dbReference>
<dbReference type="GO" id="GO:0005525">
    <property type="term" value="F:GTP binding"/>
    <property type="evidence" value="ECO:0007669"/>
    <property type="project" value="UniProtKB-KW"/>
</dbReference>
<dbReference type="GO" id="GO:0000287">
    <property type="term" value="F:magnesium ion binding"/>
    <property type="evidence" value="ECO:0007669"/>
    <property type="project" value="UniProtKB-UniRule"/>
</dbReference>
<dbReference type="GO" id="GO:0004845">
    <property type="term" value="F:uracil phosphoribosyltransferase activity"/>
    <property type="evidence" value="ECO:0007669"/>
    <property type="project" value="UniProtKB-UniRule"/>
</dbReference>
<dbReference type="GO" id="GO:0044206">
    <property type="term" value="P:UMP salvage"/>
    <property type="evidence" value="ECO:0007669"/>
    <property type="project" value="UniProtKB-UniRule"/>
</dbReference>
<dbReference type="GO" id="GO:0006223">
    <property type="term" value="P:uracil salvage"/>
    <property type="evidence" value="ECO:0007669"/>
    <property type="project" value="InterPro"/>
</dbReference>
<dbReference type="CDD" id="cd06223">
    <property type="entry name" value="PRTases_typeI"/>
    <property type="match status" value="1"/>
</dbReference>
<dbReference type="FunFam" id="3.40.50.2020:FF:000003">
    <property type="entry name" value="Uracil phosphoribosyltransferase"/>
    <property type="match status" value="1"/>
</dbReference>
<dbReference type="Gene3D" id="3.40.50.2020">
    <property type="match status" value="1"/>
</dbReference>
<dbReference type="HAMAP" id="MF_01218_B">
    <property type="entry name" value="Upp_B"/>
    <property type="match status" value="1"/>
</dbReference>
<dbReference type="InterPro" id="IPR000836">
    <property type="entry name" value="PRibTrfase_dom"/>
</dbReference>
<dbReference type="InterPro" id="IPR029057">
    <property type="entry name" value="PRTase-like"/>
</dbReference>
<dbReference type="InterPro" id="IPR034332">
    <property type="entry name" value="Upp_B"/>
</dbReference>
<dbReference type="InterPro" id="IPR050054">
    <property type="entry name" value="UPRTase/APRTase"/>
</dbReference>
<dbReference type="InterPro" id="IPR005765">
    <property type="entry name" value="Ura_phspho_trans"/>
</dbReference>
<dbReference type="NCBIfam" id="NF001097">
    <property type="entry name" value="PRK00129.1"/>
    <property type="match status" value="1"/>
</dbReference>
<dbReference type="NCBIfam" id="TIGR01091">
    <property type="entry name" value="upp"/>
    <property type="match status" value="1"/>
</dbReference>
<dbReference type="PANTHER" id="PTHR32315">
    <property type="entry name" value="ADENINE PHOSPHORIBOSYLTRANSFERASE"/>
    <property type="match status" value="1"/>
</dbReference>
<dbReference type="PANTHER" id="PTHR32315:SF4">
    <property type="entry name" value="URACIL PHOSPHORIBOSYLTRANSFERASE, CHLOROPLASTIC"/>
    <property type="match status" value="1"/>
</dbReference>
<dbReference type="Pfam" id="PF14681">
    <property type="entry name" value="UPRTase"/>
    <property type="match status" value="1"/>
</dbReference>
<dbReference type="SUPFAM" id="SSF53271">
    <property type="entry name" value="PRTase-like"/>
    <property type="match status" value="1"/>
</dbReference>
<comment type="function">
    <text evidence="1">Catalyzes the conversion of uracil and 5-phospho-alpha-D-ribose 1-diphosphate (PRPP) to UMP and diphosphate.</text>
</comment>
<comment type="catalytic activity">
    <reaction evidence="1">
        <text>UMP + diphosphate = 5-phospho-alpha-D-ribose 1-diphosphate + uracil</text>
        <dbReference type="Rhea" id="RHEA:13017"/>
        <dbReference type="ChEBI" id="CHEBI:17568"/>
        <dbReference type="ChEBI" id="CHEBI:33019"/>
        <dbReference type="ChEBI" id="CHEBI:57865"/>
        <dbReference type="ChEBI" id="CHEBI:58017"/>
        <dbReference type="EC" id="2.4.2.9"/>
    </reaction>
</comment>
<comment type="cofactor">
    <cofactor evidence="1">
        <name>Mg(2+)</name>
        <dbReference type="ChEBI" id="CHEBI:18420"/>
    </cofactor>
    <text evidence="1">Binds 1 Mg(2+) ion per subunit. The magnesium is bound as Mg-PRPP.</text>
</comment>
<comment type="activity regulation">
    <text evidence="1">Allosterically activated by GTP.</text>
</comment>
<comment type="pathway">
    <text evidence="1">Pyrimidine metabolism; UMP biosynthesis via salvage pathway; UMP from uracil: step 1/1.</text>
</comment>
<comment type="similarity">
    <text evidence="1">Belongs to the UPRTase family.</text>
</comment>
<gene>
    <name evidence="1" type="primary">upp</name>
    <name type="ordered locus">LGAS_1245</name>
</gene>
<evidence type="ECO:0000255" key="1">
    <source>
        <dbReference type="HAMAP-Rule" id="MF_01218"/>
    </source>
</evidence>
<feature type="chain" id="PRO_1000053732" description="Uracil phosphoribosyltransferase">
    <location>
        <begin position="1"/>
        <end position="209"/>
    </location>
</feature>
<feature type="binding site" evidence="1">
    <location>
        <position position="79"/>
    </location>
    <ligand>
        <name>5-phospho-alpha-D-ribose 1-diphosphate</name>
        <dbReference type="ChEBI" id="CHEBI:58017"/>
    </ligand>
</feature>
<feature type="binding site" evidence="1">
    <location>
        <position position="104"/>
    </location>
    <ligand>
        <name>5-phospho-alpha-D-ribose 1-diphosphate</name>
        <dbReference type="ChEBI" id="CHEBI:58017"/>
    </ligand>
</feature>
<feature type="binding site" evidence="1">
    <location>
        <begin position="131"/>
        <end position="139"/>
    </location>
    <ligand>
        <name>5-phospho-alpha-D-ribose 1-diphosphate</name>
        <dbReference type="ChEBI" id="CHEBI:58017"/>
    </ligand>
</feature>
<feature type="binding site" evidence="1">
    <location>
        <position position="194"/>
    </location>
    <ligand>
        <name>uracil</name>
        <dbReference type="ChEBI" id="CHEBI:17568"/>
    </ligand>
</feature>
<feature type="binding site" evidence="1">
    <location>
        <begin position="199"/>
        <end position="201"/>
    </location>
    <ligand>
        <name>uracil</name>
        <dbReference type="ChEBI" id="CHEBI:17568"/>
    </ligand>
</feature>
<feature type="binding site" evidence="1">
    <location>
        <position position="200"/>
    </location>
    <ligand>
        <name>5-phospho-alpha-D-ribose 1-diphosphate</name>
        <dbReference type="ChEBI" id="CHEBI:58017"/>
    </ligand>
</feature>
<protein>
    <recommendedName>
        <fullName evidence="1">Uracil phosphoribosyltransferase</fullName>
        <ecNumber evidence="1">2.4.2.9</ecNumber>
    </recommendedName>
    <alternativeName>
        <fullName evidence="1">UMP pyrophosphorylase</fullName>
    </alternativeName>
    <alternativeName>
        <fullName evidence="1">UPRTase</fullName>
    </alternativeName>
</protein>